<keyword id="KW-0007">Acetylation</keyword>
<keyword id="KW-0472">Membrane</keyword>
<keyword id="KW-0496">Mitochondrion</keyword>
<keyword id="KW-0999">Mitochondrion inner membrane</keyword>
<keyword id="KW-0809">Transit peptide</keyword>
<keyword id="KW-0812">Transmembrane</keyword>
<keyword id="KW-1133">Transmembrane helix</keyword>
<gene>
    <name type="primary">COX7C</name>
</gene>
<sequence>MLGHSIRRFTTSVVRRSHYEEGPGKNLPFSVKNKWALLVKMSLYFGSAFATPFLIVRHQLLKQ</sequence>
<organism>
    <name type="scientific">Papio hamadryas</name>
    <name type="common">Hamadryas baboon</name>
    <dbReference type="NCBI Taxonomy" id="9557"/>
    <lineage>
        <taxon>Eukaryota</taxon>
        <taxon>Metazoa</taxon>
        <taxon>Chordata</taxon>
        <taxon>Craniata</taxon>
        <taxon>Vertebrata</taxon>
        <taxon>Euteleostomi</taxon>
        <taxon>Mammalia</taxon>
        <taxon>Eutheria</taxon>
        <taxon>Euarchontoglires</taxon>
        <taxon>Primates</taxon>
        <taxon>Haplorrhini</taxon>
        <taxon>Catarrhini</taxon>
        <taxon>Cercopithecidae</taxon>
        <taxon>Cercopithecinae</taxon>
        <taxon>Papio</taxon>
    </lineage>
</organism>
<comment type="function">
    <text evidence="2">Component of the cytochrome c oxidase, the last enzyme in the mitochondrial electron transport chain which drives oxidative phosphorylation. The respiratory chain contains 3 multisubunit complexes succinate dehydrogenase (complex II, CII), ubiquinol-cytochrome c oxidoreductase (cytochrome b-c1 complex, complex III, CIII) and cytochrome c oxidase (complex IV, CIV), that cooperate to transfer electrons derived from NADH and succinate to molecular oxygen, creating an electrochemical gradient over the inner membrane that drives transmembrane transport and the ATP synthase. Cytochrome c oxidase is the component of the respiratory chain that catalyzes the reduction of oxygen to water. Electrons originating from reduced cytochrome c in the intermembrane space (IMS) are transferred via the dinuclear copper A center (CU(A)) of subunit 2 and heme A of subunit 1 to the active site in subunit 1, a binuclear center (BNC) formed by heme A3 and copper B (CU(B)). The BNC reduces molecular oxygen to 2 water molecules using 4 electrons from cytochrome c in the IMS and 4 protons from the mitochondrial matrix.</text>
</comment>
<comment type="pathway">
    <text evidence="2">Energy metabolism; oxidative phosphorylation.</text>
</comment>
<comment type="subunit">
    <text evidence="1 3">Component of the cytochrome c oxidase (complex IV, CIV), a multisubunit enzyme composed of 14 subunits. The complex is composed of a catalytic core of 3 subunits MT-CO1, MT-CO2 and MT-CO3, encoded in the mitochondrial DNA, and 11 supernumerary subunits COX4I, COX5A, COX5B, COX6A, COX6B, COX6C, COX7A, COX7B, COX7C, COX8 and NDUFA4, which are encoded in the nuclear genome. The complex exists as a monomer or a dimer and forms supercomplexes (SCs) in the inner mitochondrial membrane with NADH-ubiquinone oxidoreductase (complex I, CI) and ubiquinol-cytochrome c oxidoreductase (cytochrome b-c1 complex, complex III, CIII), resulting in different assemblies (supercomplex SCI(1)III(2)IV(1) and megacomplex MCI(2)III(2)IV(2)) (By similarity). Interacts with RAB5IF (By similarity).</text>
</comment>
<comment type="subcellular location">
    <subcellularLocation>
        <location evidence="1">Mitochondrion inner membrane</location>
        <topology evidence="1">Single-pass membrane protein</topology>
    </subcellularLocation>
</comment>
<comment type="similarity">
    <text evidence="5">Belongs to the cytochrome c oxidase VIIc family.</text>
</comment>
<feature type="transit peptide" description="Mitochondrion" evidence="1">
    <location>
        <begin position="1"/>
        <end position="16"/>
    </location>
</feature>
<feature type="chain" id="PRO_0000006169" description="Cytochrome c oxidase subunit 7C, mitochondrial">
    <location>
        <begin position="17"/>
        <end position="63"/>
    </location>
</feature>
<feature type="topological domain" description="Mitochondrial matrix" evidence="1">
    <location>
        <begin position="17"/>
        <end position="33"/>
    </location>
</feature>
<feature type="transmembrane region" description="Helical" evidence="1">
    <location>
        <begin position="34"/>
        <end position="60"/>
    </location>
</feature>
<feature type="topological domain" description="Mitochondrial intermembrane" evidence="1">
    <location>
        <begin position="61"/>
        <end position="63"/>
    </location>
</feature>
<feature type="modified residue" description="N6-acetyllysine; alternate" evidence="4">
    <location>
        <position position="25"/>
    </location>
</feature>
<feature type="modified residue" description="N6-succinyllysine; alternate" evidence="4">
    <location>
        <position position="25"/>
    </location>
</feature>
<evidence type="ECO:0000250" key="1">
    <source>
        <dbReference type="UniProtKB" id="P00430"/>
    </source>
</evidence>
<evidence type="ECO:0000250" key="2">
    <source>
        <dbReference type="UniProtKB" id="P04039"/>
    </source>
</evidence>
<evidence type="ECO:0000250" key="3">
    <source>
        <dbReference type="UniProtKB" id="P15954"/>
    </source>
</evidence>
<evidence type="ECO:0000250" key="4">
    <source>
        <dbReference type="UniProtKB" id="P17665"/>
    </source>
</evidence>
<evidence type="ECO:0000305" key="5"/>
<reference key="1">
    <citation type="journal article" date="2002" name="Genomics">
        <title>Search for genes positively selected during primate evolution by 5'-end-sequence screening of cynomolgus monkey cDNAs.</title>
        <authorList>
            <person name="Osada N."/>
            <person name="Kusuda J."/>
            <person name="Hirata M."/>
            <person name="Tanuma R."/>
            <person name="Hida M."/>
            <person name="Sugano S."/>
            <person name="Hirai M."/>
            <person name="Hashimoto K."/>
        </authorList>
    </citation>
    <scope>NUCLEOTIDE SEQUENCE [GENOMIC DNA]</scope>
</reference>
<dbReference type="EMBL" id="AB072321">
    <property type="protein sequence ID" value="BAB86875.1"/>
    <property type="molecule type" value="Genomic_DNA"/>
</dbReference>
<dbReference type="SMR" id="Q8SQ80"/>
<dbReference type="UniPathway" id="UPA00705"/>
<dbReference type="GO" id="GO:0005743">
    <property type="term" value="C:mitochondrial inner membrane"/>
    <property type="evidence" value="ECO:0007669"/>
    <property type="project" value="UniProtKB-SubCell"/>
</dbReference>
<dbReference type="GO" id="GO:0045277">
    <property type="term" value="C:respiratory chain complex IV"/>
    <property type="evidence" value="ECO:0007669"/>
    <property type="project" value="InterPro"/>
</dbReference>
<dbReference type="GO" id="GO:0006123">
    <property type="term" value="P:mitochondrial electron transport, cytochrome c to oxygen"/>
    <property type="evidence" value="ECO:0007669"/>
    <property type="project" value="InterPro"/>
</dbReference>
<dbReference type="CDD" id="cd00929">
    <property type="entry name" value="Cyt_c_Oxidase_VIIc"/>
    <property type="match status" value="1"/>
</dbReference>
<dbReference type="FunFam" id="4.10.49.10:FF:000001">
    <property type="entry name" value="Cytochrome c oxidase subunit 7C"/>
    <property type="match status" value="1"/>
</dbReference>
<dbReference type="Gene3D" id="4.10.49.10">
    <property type="entry name" value="Cytochrome c oxidase subunit VIIc"/>
    <property type="match status" value="1"/>
</dbReference>
<dbReference type="InterPro" id="IPR004202">
    <property type="entry name" value="COX7C/Cox8"/>
</dbReference>
<dbReference type="InterPro" id="IPR036636">
    <property type="entry name" value="COX7C/Cox8_sf"/>
</dbReference>
<dbReference type="PANTHER" id="PTHR13313:SF0">
    <property type="entry name" value="CYTOCHROME C OXIDASE SUBUNIT 7C, MITOCHONDRIAL"/>
    <property type="match status" value="1"/>
</dbReference>
<dbReference type="PANTHER" id="PTHR13313">
    <property type="entry name" value="CYTOCHROME C OXIDASE SUBUNIT VIIC"/>
    <property type="match status" value="1"/>
</dbReference>
<dbReference type="Pfam" id="PF02935">
    <property type="entry name" value="COX7C"/>
    <property type="match status" value="1"/>
</dbReference>
<dbReference type="SUPFAM" id="SSF81427">
    <property type="entry name" value="Mitochondrial cytochrome c oxidase subunit VIIc (aka VIIIa)"/>
    <property type="match status" value="1"/>
</dbReference>
<protein>
    <recommendedName>
        <fullName>Cytochrome c oxidase subunit 7C, mitochondrial</fullName>
    </recommendedName>
    <alternativeName>
        <fullName>Cytochrome c oxidase polypeptide VIIc</fullName>
    </alternativeName>
</protein>
<proteinExistence type="inferred from homology"/>
<accession>Q8SQ80</accession>
<name>COX7C_PAPHA</name>